<name>RS9_ECOLU</name>
<feature type="chain" id="PRO_1000128121" description="Small ribosomal subunit protein uS9">
    <location>
        <begin position="1"/>
        <end position="130"/>
    </location>
</feature>
<keyword id="KW-0687">Ribonucleoprotein</keyword>
<keyword id="KW-0689">Ribosomal protein</keyword>
<dbReference type="EMBL" id="CU928163">
    <property type="protein sequence ID" value="CAR14858.1"/>
    <property type="molecule type" value="Genomic_DNA"/>
</dbReference>
<dbReference type="RefSeq" id="WP_000829818.1">
    <property type="nucleotide sequence ID" value="NC_011751.1"/>
</dbReference>
<dbReference type="RefSeq" id="YP_002414363.1">
    <property type="nucleotide sequence ID" value="NC_011751.1"/>
</dbReference>
<dbReference type="SMR" id="B7NDK8"/>
<dbReference type="STRING" id="585056.ECUMN_3704"/>
<dbReference type="GeneID" id="98390344"/>
<dbReference type="KEGG" id="eum:ECUMN_3704"/>
<dbReference type="PATRIC" id="fig|585056.7.peg.3887"/>
<dbReference type="HOGENOM" id="CLU_046483_2_1_6"/>
<dbReference type="PRO" id="PR:B7NDK8"/>
<dbReference type="Proteomes" id="UP000007097">
    <property type="component" value="Chromosome"/>
</dbReference>
<dbReference type="GO" id="GO:0022627">
    <property type="term" value="C:cytosolic small ribosomal subunit"/>
    <property type="evidence" value="ECO:0007669"/>
    <property type="project" value="TreeGrafter"/>
</dbReference>
<dbReference type="GO" id="GO:0003723">
    <property type="term" value="F:RNA binding"/>
    <property type="evidence" value="ECO:0007669"/>
    <property type="project" value="TreeGrafter"/>
</dbReference>
<dbReference type="GO" id="GO:0003735">
    <property type="term" value="F:structural constituent of ribosome"/>
    <property type="evidence" value="ECO:0007669"/>
    <property type="project" value="InterPro"/>
</dbReference>
<dbReference type="GO" id="GO:0006412">
    <property type="term" value="P:translation"/>
    <property type="evidence" value="ECO:0007669"/>
    <property type="project" value="UniProtKB-UniRule"/>
</dbReference>
<dbReference type="FunFam" id="3.30.230.10:FF:000001">
    <property type="entry name" value="30S ribosomal protein S9"/>
    <property type="match status" value="1"/>
</dbReference>
<dbReference type="Gene3D" id="3.30.230.10">
    <property type="match status" value="1"/>
</dbReference>
<dbReference type="HAMAP" id="MF_00532_B">
    <property type="entry name" value="Ribosomal_uS9_B"/>
    <property type="match status" value="1"/>
</dbReference>
<dbReference type="InterPro" id="IPR020568">
    <property type="entry name" value="Ribosomal_Su5_D2-typ_SF"/>
</dbReference>
<dbReference type="InterPro" id="IPR000754">
    <property type="entry name" value="Ribosomal_uS9"/>
</dbReference>
<dbReference type="InterPro" id="IPR023035">
    <property type="entry name" value="Ribosomal_uS9_bac/plastid"/>
</dbReference>
<dbReference type="InterPro" id="IPR020574">
    <property type="entry name" value="Ribosomal_uS9_CS"/>
</dbReference>
<dbReference type="InterPro" id="IPR014721">
    <property type="entry name" value="Ribsml_uS5_D2-typ_fold_subgr"/>
</dbReference>
<dbReference type="NCBIfam" id="NF001099">
    <property type="entry name" value="PRK00132.1"/>
    <property type="match status" value="1"/>
</dbReference>
<dbReference type="PANTHER" id="PTHR21569">
    <property type="entry name" value="RIBOSOMAL PROTEIN S9"/>
    <property type="match status" value="1"/>
</dbReference>
<dbReference type="PANTHER" id="PTHR21569:SF1">
    <property type="entry name" value="SMALL RIBOSOMAL SUBUNIT PROTEIN US9M"/>
    <property type="match status" value="1"/>
</dbReference>
<dbReference type="Pfam" id="PF00380">
    <property type="entry name" value="Ribosomal_S9"/>
    <property type="match status" value="1"/>
</dbReference>
<dbReference type="SUPFAM" id="SSF54211">
    <property type="entry name" value="Ribosomal protein S5 domain 2-like"/>
    <property type="match status" value="1"/>
</dbReference>
<dbReference type="PROSITE" id="PS00360">
    <property type="entry name" value="RIBOSOMAL_S9"/>
    <property type="match status" value="1"/>
</dbReference>
<protein>
    <recommendedName>
        <fullName evidence="1">Small ribosomal subunit protein uS9</fullName>
    </recommendedName>
    <alternativeName>
        <fullName evidence="2">30S ribosomal protein S9</fullName>
    </alternativeName>
</protein>
<comment type="similarity">
    <text evidence="1">Belongs to the universal ribosomal protein uS9 family.</text>
</comment>
<reference key="1">
    <citation type="journal article" date="2009" name="PLoS Genet.">
        <title>Organised genome dynamics in the Escherichia coli species results in highly diverse adaptive paths.</title>
        <authorList>
            <person name="Touchon M."/>
            <person name="Hoede C."/>
            <person name="Tenaillon O."/>
            <person name="Barbe V."/>
            <person name="Baeriswyl S."/>
            <person name="Bidet P."/>
            <person name="Bingen E."/>
            <person name="Bonacorsi S."/>
            <person name="Bouchier C."/>
            <person name="Bouvet O."/>
            <person name="Calteau A."/>
            <person name="Chiapello H."/>
            <person name="Clermont O."/>
            <person name="Cruveiller S."/>
            <person name="Danchin A."/>
            <person name="Diard M."/>
            <person name="Dossat C."/>
            <person name="Karoui M.E."/>
            <person name="Frapy E."/>
            <person name="Garry L."/>
            <person name="Ghigo J.M."/>
            <person name="Gilles A.M."/>
            <person name="Johnson J."/>
            <person name="Le Bouguenec C."/>
            <person name="Lescat M."/>
            <person name="Mangenot S."/>
            <person name="Martinez-Jehanne V."/>
            <person name="Matic I."/>
            <person name="Nassif X."/>
            <person name="Oztas S."/>
            <person name="Petit M.A."/>
            <person name="Pichon C."/>
            <person name="Rouy Z."/>
            <person name="Ruf C.S."/>
            <person name="Schneider D."/>
            <person name="Tourret J."/>
            <person name="Vacherie B."/>
            <person name="Vallenet D."/>
            <person name="Medigue C."/>
            <person name="Rocha E.P.C."/>
            <person name="Denamur E."/>
        </authorList>
    </citation>
    <scope>NUCLEOTIDE SEQUENCE [LARGE SCALE GENOMIC DNA]</scope>
    <source>
        <strain>UMN026 / ExPEC</strain>
    </source>
</reference>
<proteinExistence type="inferred from homology"/>
<sequence length="130" mass="14856">MAENQYYGTGRRKSSAARVFIKPGNGKIVINQRSLEQYFGRETARMVVRQPLELVDMVEKLDLYITVKGGGISGQAGAIRHGITRALMEYDESLRSELRKAGFVTRDARQVERKKVGLRKARRRPQFSKR</sequence>
<gene>
    <name evidence="1" type="primary">rpsI</name>
    <name type="ordered locus">ECUMN_3704</name>
</gene>
<organism>
    <name type="scientific">Escherichia coli O17:K52:H18 (strain UMN026 / ExPEC)</name>
    <dbReference type="NCBI Taxonomy" id="585056"/>
    <lineage>
        <taxon>Bacteria</taxon>
        <taxon>Pseudomonadati</taxon>
        <taxon>Pseudomonadota</taxon>
        <taxon>Gammaproteobacteria</taxon>
        <taxon>Enterobacterales</taxon>
        <taxon>Enterobacteriaceae</taxon>
        <taxon>Escherichia</taxon>
    </lineage>
</organism>
<accession>B7NDK8</accession>
<evidence type="ECO:0000255" key="1">
    <source>
        <dbReference type="HAMAP-Rule" id="MF_00532"/>
    </source>
</evidence>
<evidence type="ECO:0000305" key="2"/>